<evidence type="ECO:0000250" key="1"/>
<evidence type="ECO:0000250" key="2">
    <source>
        <dbReference type="UniProtKB" id="Q8CFE6"/>
    </source>
</evidence>
<evidence type="ECO:0000250" key="3">
    <source>
        <dbReference type="UniProtKB" id="Q9JHE5"/>
    </source>
</evidence>
<evidence type="ECO:0000255" key="4"/>
<evidence type="ECO:0000255" key="5">
    <source>
        <dbReference type="PROSITE-ProRule" id="PRU00114"/>
    </source>
</evidence>
<evidence type="ECO:0000256" key="6">
    <source>
        <dbReference type="SAM" id="MobiDB-lite"/>
    </source>
</evidence>
<evidence type="ECO:0000269" key="7">
    <source>
    </source>
</evidence>
<evidence type="ECO:0000269" key="8">
    <source>
    </source>
</evidence>
<evidence type="ECO:0000269" key="9">
    <source>
    </source>
</evidence>
<evidence type="ECO:0000269" key="10">
    <source>
    </source>
</evidence>
<evidence type="ECO:0000269" key="11">
    <source>
    </source>
</evidence>
<evidence type="ECO:0000269" key="12">
    <source>
    </source>
</evidence>
<evidence type="ECO:0000269" key="13">
    <source>
    </source>
</evidence>
<evidence type="ECO:0000303" key="14">
    <source>
    </source>
</evidence>
<evidence type="ECO:0000303" key="15">
    <source>
    </source>
</evidence>
<evidence type="ECO:0000303" key="16">
    <source ref="7"/>
</evidence>
<evidence type="ECO:0000305" key="17"/>
<evidence type="ECO:0000312" key="18">
    <source>
        <dbReference type="HGNC" id="HGNC:13448"/>
    </source>
</evidence>
<evidence type="ECO:0007744" key="19">
    <source>
    </source>
</evidence>
<evidence type="ECO:0007744" key="20">
    <source>
    </source>
</evidence>
<evidence type="ECO:0007744" key="21">
    <source>
    </source>
</evidence>
<gene>
    <name evidence="18" type="primary">SLC38A2</name>
    <name evidence="14" type="synonym">ATA2</name>
    <name type="synonym">KIAA1382</name>
    <name type="synonym">SAT2</name>
    <name type="synonym">SNAT2</name>
</gene>
<sequence>MKKAEMGRFSISPDEDSSSYSSNSDFNYSYPTKQAALKSHYADVDPENQNFLLESNLGKKKYETEFHPGTTSFGMSVFNLSNAIVGSGILGLSYAMANTGIALFIILLTFVSIFSLYSVHLLLKTANEGGSLLYEQLGYKAFGLVGKLAASGSITMQNIGAMSSYLFIVKYELPLVIQALTNIEDKTGLWYLNGNYLVLLVSLVVILPLSLFRNLGYLGYTSGLSLLCMVFFLIVVICKKFQVPCPVEAALIINETINTTLTQPTALVPALSHNVTENDSCRPHYFIFNSQTVYAVPILIFSFVCHPAVLPIYEELKDRSRRRMMNVSKISFFAMFLMYLLAALFGYLTFYEHVESELLHTYSSILGTDILLLIVRLAVLMAVTLTVPVVIFPIRSSVTHLLCASKDFSWWRHSLITVSILAFTNLLVIFVPTIRDIFGFIGASAASMLIFILPSAFYIKLVKKEPMKSVQKIGALFFLLSGVLVMTGSMALIVLDWVHNAPGGGH</sequence>
<dbReference type="EMBL" id="AF259799">
    <property type="protein sequence ID" value="AAK38510.1"/>
    <property type="molecule type" value="mRNA"/>
</dbReference>
<dbReference type="EMBL" id="AF298897">
    <property type="protein sequence ID" value="AAG24618.1"/>
    <property type="molecule type" value="mRNA"/>
</dbReference>
<dbReference type="EMBL" id="AJ344099">
    <property type="protein sequence ID" value="CAC51434.1"/>
    <property type="molecule type" value="mRNA"/>
</dbReference>
<dbReference type="EMBL" id="AB037803">
    <property type="protein sequence ID" value="BAA92620.2"/>
    <property type="molecule type" value="mRNA"/>
</dbReference>
<dbReference type="EMBL" id="AK001700">
    <property type="protein sequence ID" value="BAA91846.1"/>
    <property type="molecule type" value="mRNA"/>
</dbReference>
<dbReference type="EMBL" id="AK172784">
    <property type="protein sequence ID" value="BAD18765.1"/>
    <property type="status" value="ALT_INIT"/>
    <property type="molecule type" value="mRNA"/>
</dbReference>
<dbReference type="EMBL" id="CR457267">
    <property type="protein sequence ID" value="CAG33548.1"/>
    <property type="molecule type" value="mRNA"/>
</dbReference>
<dbReference type="EMBL" id="CH471111">
    <property type="protein sequence ID" value="EAW57900.1"/>
    <property type="molecule type" value="Genomic_DNA"/>
</dbReference>
<dbReference type="EMBL" id="CH471111">
    <property type="protein sequence ID" value="EAW57901.1"/>
    <property type="molecule type" value="Genomic_DNA"/>
</dbReference>
<dbReference type="EMBL" id="BC040342">
    <property type="protein sequence ID" value="AAH40342.1"/>
    <property type="molecule type" value="mRNA"/>
</dbReference>
<dbReference type="CCDS" id="CCDS76551.1">
    <molecule id="Q96QD8-2"/>
</dbReference>
<dbReference type="CCDS" id="CCDS8749.1">
    <molecule id="Q96QD8-1"/>
</dbReference>
<dbReference type="RefSeq" id="NP_001294865.1">
    <molecule id="Q96QD8-2"/>
    <property type="nucleotide sequence ID" value="NM_001307936.2"/>
</dbReference>
<dbReference type="RefSeq" id="NP_061849.2">
    <molecule id="Q96QD8-1"/>
    <property type="nucleotide sequence ID" value="NM_018976.4"/>
</dbReference>
<dbReference type="RefSeq" id="XP_047284975.1">
    <molecule id="Q96QD8-2"/>
    <property type="nucleotide sequence ID" value="XM_047429019.1"/>
</dbReference>
<dbReference type="RefSeq" id="XP_054228290.1">
    <molecule id="Q96QD8-2"/>
    <property type="nucleotide sequence ID" value="XM_054372315.1"/>
</dbReference>
<dbReference type="SMR" id="Q96QD8"/>
<dbReference type="BioGRID" id="119943">
    <property type="interactions" value="154"/>
</dbReference>
<dbReference type="FunCoup" id="Q96QD8">
    <property type="interactions" value="979"/>
</dbReference>
<dbReference type="IntAct" id="Q96QD8">
    <property type="interactions" value="56"/>
</dbReference>
<dbReference type="MINT" id="Q96QD8"/>
<dbReference type="STRING" id="9606.ENSP00000256689"/>
<dbReference type="DrugBank" id="DB00174">
    <property type="generic name" value="Asparagine"/>
</dbReference>
<dbReference type="DrugBank" id="DB00130">
    <property type="generic name" value="L-Glutamine"/>
</dbReference>
<dbReference type="TCDB" id="2.A.18.6.5">
    <property type="family name" value="the amino acid/auxin permease (aaap) family"/>
</dbReference>
<dbReference type="GlyCosmos" id="Q96QD8">
    <property type="glycosylation" value="2 sites, No reported glycans"/>
</dbReference>
<dbReference type="GlyGen" id="Q96QD8">
    <property type="glycosylation" value="3 sites, 1 O-linked glycan (1 site)"/>
</dbReference>
<dbReference type="iPTMnet" id="Q96QD8"/>
<dbReference type="MetOSite" id="Q96QD8"/>
<dbReference type="PhosphoSitePlus" id="Q96QD8"/>
<dbReference type="SwissPalm" id="Q96QD8"/>
<dbReference type="BioMuta" id="SLC38A2"/>
<dbReference type="DMDM" id="162416227"/>
<dbReference type="jPOST" id="Q96QD8"/>
<dbReference type="MassIVE" id="Q96QD8"/>
<dbReference type="PaxDb" id="9606-ENSP00000256689"/>
<dbReference type="PeptideAtlas" id="Q96QD8"/>
<dbReference type="ProteomicsDB" id="77855">
    <molecule id="Q96QD8-1"/>
</dbReference>
<dbReference type="ProteomicsDB" id="77856">
    <molecule id="Q96QD8-2"/>
</dbReference>
<dbReference type="Pumba" id="Q96QD8"/>
<dbReference type="Antibodypedia" id="13370">
    <property type="antibodies" value="133 antibodies from 24 providers"/>
</dbReference>
<dbReference type="DNASU" id="54407"/>
<dbReference type="Ensembl" id="ENST00000256689.10">
    <molecule id="Q96QD8-1"/>
    <property type="protein sequence ID" value="ENSP00000256689.5"/>
    <property type="gene ID" value="ENSG00000134294.14"/>
</dbReference>
<dbReference type="Ensembl" id="ENST00000612232.1">
    <molecule id="Q96QD8-2"/>
    <property type="protein sequence ID" value="ENSP00000482873.1"/>
    <property type="gene ID" value="ENSG00000134294.14"/>
</dbReference>
<dbReference type="GeneID" id="54407"/>
<dbReference type="KEGG" id="hsa:54407"/>
<dbReference type="MANE-Select" id="ENST00000256689.10">
    <property type="protein sequence ID" value="ENSP00000256689.5"/>
    <property type="RefSeq nucleotide sequence ID" value="NM_018976.5"/>
    <property type="RefSeq protein sequence ID" value="NP_061849.2"/>
</dbReference>
<dbReference type="UCSC" id="uc001rpg.4">
    <molecule id="Q96QD8-1"/>
    <property type="organism name" value="human"/>
</dbReference>
<dbReference type="AGR" id="HGNC:13448"/>
<dbReference type="CTD" id="54407"/>
<dbReference type="DisGeNET" id="54407"/>
<dbReference type="GeneCards" id="SLC38A2"/>
<dbReference type="HGNC" id="HGNC:13448">
    <property type="gene designation" value="SLC38A2"/>
</dbReference>
<dbReference type="HPA" id="ENSG00000134294">
    <property type="expression patterns" value="Low tissue specificity"/>
</dbReference>
<dbReference type="MIM" id="605180">
    <property type="type" value="gene"/>
</dbReference>
<dbReference type="neXtProt" id="NX_Q96QD8"/>
<dbReference type="OpenTargets" id="ENSG00000134294"/>
<dbReference type="PharmGKB" id="PA37773"/>
<dbReference type="VEuPathDB" id="HostDB:ENSG00000134294"/>
<dbReference type="eggNOG" id="KOG1305">
    <property type="taxonomic scope" value="Eukaryota"/>
</dbReference>
<dbReference type="GeneTree" id="ENSGT00940000155486"/>
<dbReference type="HOGENOM" id="CLU_009020_0_1_1"/>
<dbReference type="InParanoid" id="Q96QD8"/>
<dbReference type="OMA" id="DSIHHQR"/>
<dbReference type="OrthoDB" id="655540at2759"/>
<dbReference type="PAN-GO" id="Q96QD8">
    <property type="GO annotations" value="4 GO annotations based on evolutionary models"/>
</dbReference>
<dbReference type="PhylomeDB" id="Q96QD8"/>
<dbReference type="TreeFam" id="TF328787"/>
<dbReference type="PathwayCommons" id="Q96QD8"/>
<dbReference type="Reactome" id="R-HSA-210500">
    <property type="pathway name" value="Glutamate Neurotransmitter Release Cycle"/>
</dbReference>
<dbReference type="Reactome" id="R-HSA-352230">
    <property type="pathway name" value="Amino acid transport across the plasma membrane"/>
</dbReference>
<dbReference type="SignaLink" id="Q96QD8"/>
<dbReference type="SIGNOR" id="Q96QD8"/>
<dbReference type="BioGRID-ORCS" id="54407">
    <property type="hits" value="121 hits in 1165 CRISPR screens"/>
</dbReference>
<dbReference type="ChiTaRS" id="SLC38A2">
    <property type="organism name" value="human"/>
</dbReference>
<dbReference type="GeneWiki" id="SLC38A2"/>
<dbReference type="GenomeRNAi" id="54407"/>
<dbReference type="Pharos" id="Q96QD8">
    <property type="development level" value="Tbio"/>
</dbReference>
<dbReference type="PRO" id="PR:Q96QD8"/>
<dbReference type="Proteomes" id="UP000005640">
    <property type="component" value="Chromosome 12"/>
</dbReference>
<dbReference type="RNAct" id="Q96QD8">
    <property type="molecule type" value="protein"/>
</dbReference>
<dbReference type="Bgee" id="ENSG00000134294">
    <property type="expression patterns" value="Expressed in tibia and 217 other cell types or tissues"/>
</dbReference>
<dbReference type="ExpressionAtlas" id="Q96QD8">
    <property type="expression patterns" value="baseline and differential"/>
</dbReference>
<dbReference type="GO" id="GO:0030424">
    <property type="term" value="C:axon"/>
    <property type="evidence" value="ECO:0007669"/>
    <property type="project" value="Ensembl"/>
</dbReference>
<dbReference type="GO" id="GO:0005903">
    <property type="term" value="C:brush border"/>
    <property type="evidence" value="ECO:0007669"/>
    <property type="project" value="Ensembl"/>
</dbReference>
<dbReference type="GO" id="GO:0005737">
    <property type="term" value="C:cytoplasm"/>
    <property type="evidence" value="ECO:0000314"/>
    <property type="project" value="ARUK-UCL"/>
</dbReference>
<dbReference type="GO" id="GO:0030425">
    <property type="term" value="C:dendrite"/>
    <property type="evidence" value="ECO:0007669"/>
    <property type="project" value="Ensembl"/>
</dbReference>
<dbReference type="GO" id="GO:0043025">
    <property type="term" value="C:neuronal cell body"/>
    <property type="evidence" value="ECO:0007669"/>
    <property type="project" value="Ensembl"/>
</dbReference>
<dbReference type="GO" id="GO:0005886">
    <property type="term" value="C:plasma membrane"/>
    <property type="evidence" value="ECO:0000314"/>
    <property type="project" value="ARUK-UCL"/>
</dbReference>
<dbReference type="GO" id="GO:0042383">
    <property type="term" value="C:sarcolemma"/>
    <property type="evidence" value="ECO:0007669"/>
    <property type="project" value="Ensembl"/>
</dbReference>
<dbReference type="GO" id="GO:0015172">
    <property type="term" value="F:acidic amino acid transmembrane transporter activity"/>
    <property type="evidence" value="ECO:0000250"/>
    <property type="project" value="UniProtKB"/>
</dbReference>
<dbReference type="GO" id="GO:0015655">
    <property type="term" value="F:alanine:sodium symporter activity"/>
    <property type="evidence" value="ECO:0000250"/>
    <property type="project" value="UniProtKB"/>
</dbReference>
<dbReference type="GO" id="GO:0015171">
    <property type="term" value="F:amino acid transmembrane transporter activity"/>
    <property type="evidence" value="ECO:0000314"/>
    <property type="project" value="UniProtKB"/>
</dbReference>
<dbReference type="GO" id="GO:0005283">
    <property type="term" value="F:amino acid:sodium symporter activity"/>
    <property type="evidence" value="ECO:0000314"/>
    <property type="project" value="UniProtKB"/>
</dbReference>
<dbReference type="GO" id="GO:0015186">
    <property type="term" value="F:L-glutamine transmembrane transporter activity"/>
    <property type="evidence" value="ECO:0000250"/>
    <property type="project" value="ARUK-UCL"/>
</dbReference>
<dbReference type="GO" id="GO:0015194">
    <property type="term" value="F:L-serine transmembrane transporter activity"/>
    <property type="evidence" value="ECO:0000250"/>
    <property type="project" value="ARUK-UCL"/>
</dbReference>
<dbReference type="GO" id="GO:0005295">
    <property type="term" value="F:neutral L-amino acid:sodium symporter activity"/>
    <property type="evidence" value="ECO:0000314"/>
    <property type="project" value="ARUK-UCL"/>
</dbReference>
<dbReference type="GO" id="GO:0005298">
    <property type="term" value="F:proline:sodium symporter activity"/>
    <property type="evidence" value="ECO:0000250"/>
    <property type="project" value="UniProtKB"/>
</dbReference>
<dbReference type="GO" id="GO:0032328">
    <property type="term" value="P:alanine transport"/>
    <property type="evidence" value="ECO:0000250"/>
    <property type="project" value="UniProtKB"/>
</dbReference>
<dbReference type="GO" id="GO:0043090">
    <property type="term" value="P:amino acid import"/>
    <property type="evidence" value="ECO:0000250"/>
    <property type="project" value="UniProtKB"/>
</dbReference>
<dbReference type="GO" id="GO:0003333">
    <property type="term" value="P:amino acid transmembrane transport"/>
    <property type="evidence" value="ECO:0000315"/>
    <property type="project" value="ARUK-UCL"/>
</dbReference>
<dbReference type="GO" id="GO:0006865">
    <property type="term" value="P:amino acid transport"/>
    <property type="evidence" value="ECO:0000314"/>
    <property type="project" value="UniProtKB"/>
</dbReference>
<dbReference type="GO" id="GO:0034198">
    <property type="term" value="P:cellular response to amino acid starvation"/>
    <property type="evidence" value="ECO:0007669"/>
    <property type="project" value="Ensembl"/>
</dbReference>
<dbReference type="GO" id="GO:1903841">
    <property type="term" value="P:cellular response to arsenite(3-)"/>
    <property type="evidence" value="ECO:0000315"/>
    <property type="project" value="ARUK-UCL"/>
</dbReference>
<dbReference type="GO" id="GO:0071260">
    <property type="term" value="P:cellular response to mechanical stimulus"/>
    <property type="evidence" value="ECO:0007669"/>
    <property type="project" value="Ensembl"/>
</dbReference>
<dbReference type="GO" id="GO:0021987">
    <property type="term" value="P:cerebral cortex development"/>
    <property type="evidence" value="ECO:0007669"/>
    <property type="project" value="Ensembl"/>
</dbReference>
<dbReference type="GO" id="GO:0007565">
    <property type="term" value="P:female pregnancy"/>
    <property type="evidence" value="ECO:0007669"/>
    <property type="project" value="Ensembl"/>
</dbReference>
<dbReference type="GO" id="GO:0006868">
    <property type="term" value="P:glutamine transport"/>
    <property type="evidence" value="ECO:0000250"/>
    <property type="project" value="ARUK-UCL"/>
</dbReference>
<dbReference type="GO" id="GO:0031460">
    <property type="term" value="P:glycine betaine transport"/>
    <property type="evidence" value="ECO:0007669"/>
    <property type="project" value="Ensembl"/>
</dbReference>
<dbReference type="GO" id="GO:1903803">
    <property type="term" value="P:L-glutamine import across plasma membrane"/>
    <property type="evidence" value="ECO:0000250"/>
    <property type="project" value="UniProtKB"/>
</dbReference>
<dbReference type="GO" id="GO:1904271">
    <property type="term" value="P:L-proline import across plasma membrane"/>
    <property type="evidence" value="ECO:0000250"/>
    <property type="project" value="UniProtKB"/>
</dbReference>
<dbReference type="GO" id="GO:1903812">
    <property type="term" value="P:L-serine import across plasma membrane"/>
    <property type="evidence" value="ECO:0000250"/>
    <property type="project" value="UniProtKB"/>
</dbReference>
<dbReference type="GO" id="GO:0015825">
    <property type="term" value="P:L-serine transport"/>
    <property type="evidence" value="ECO:0000250"/>
    <property type="project" value="ARUK-UCL"/>
</dbReference>
<dbReference type="GO" id="GO:0006836">
    <property type="term" value="P:neurotransmitter transport"/>
    <property type="evidence" value="ECO:0000304"/>
    <property type="project" value="Reactome"/>
</dbReference>
<dbReference type="GO" id="GO:0015804">
    <property type="term" value="P:neutral amino acid transport"/>
    <property type="evidence" value="ECO:0000314"/>
    <property type="project" value="ARUK-UCL"/>
</dbReference>
<dbReference type="GO" id="GO:0010628">
    <property type="term" value="P:positive regulation of gene expression"/>
    <property type="evidence" value="ECO:0000353"/>
    <property type="project" value="ARUK-UCL"/>
</dbReference>
<dbReference type="GO" id="GO:0033120">
    <property type="term" value="P:positive regulation of RNA splicing"/>
    <property type="evidence" value="ECO:0000353"/>
    <property type="project" value="ARUK-UCL"/>
</dbReference>
<dbReference type="GO" id="GO:0015824">
    <property type="term" value="P:proline transport"/>
    <property type="evidence" value="ECO:0000250"/>
    <property type="project" value="UniProtKB"/>
</dbReference>
<dbReference type="GO" id="GO:0080135">
    <property type="term" value="P:regulation of cellular response to stress"/>
    <property type="evidence" value="ECO:0000315"/>
    <property type="project" value="ARUK-UCL"/>
</dbReference>
<dbReference type="GO" id="GO:1903294">
    <property type="term" value="P:regulation of glutamate secretion, neurotransmission"/>
    <property type="evidence" value="ECO:0000250"/>
    <property type="project" value="UniProtKB"/>
</dbReference>
<dbReference type="GO" id="GO:0014850">
    <property type="term" value="P:response to muscle activity"/>
    <property type="evidence" value="ECO:0007669"/>
    <property type="project" value="Ensembl"/>
</dbReference>
<dbReference type="GO" id="GO:0150104">
    <property type="term" value="P:transport across blood-brain barrier"/>
    <property type="evidence" value="ECO:0000303"/>
    <property type="project" value="ARUK-UCL"/>
</dbReference>
<dbReference type="InterPro" id="IPR013057">
    <property type="entry name" value="AA_transpt_TM"/>
</dbReference>
<dbReference type="PANTHER" id="PTHR22950">
    <property type="entry name" value="AMINO ACID TRANSPORTER"/>
    <property type="match status" value="1"/>
</dbReference>
<dbReference type="PANTHER" id="PTHR22950:SF207">
    <property type="entry name" value="SODIUM-COUPLED NEUTRAL AMINO ACID SYMPORTER 2"/>
    <property type="match status" value="1"/>
</dbReference>
<dbReference type="Pfam" id="PF01490">
    <property type="entry name" value="Aa_trans"/>
    <property type="match status" value="1"/>
</dbReference>
<proteinExistence type="evidence at protein level"/>
<comment type="function">
    <text evidence="2 3 7 9 10 12">Symporter that cotransports neutral amino acids and sodium ions from the extracellular to the intracellular side of the cell membrane (PubMed:10930503, PubMed:15774260, PubMed:15922329, PubMed:16621798). The transport is pH-sensitive, Li(+)-intolerant, electrogenic, driven by the Na(+) electrochemical gradient and cotransports of neutral amino acids and sodium ions with a stoichiometry of 1:1. May function in the transport of amino acids at the blood-brain barrier (PubMed:10930503, PubMed:15774260). May function in the transport of amino acids in the supply of maternal nutrients to the fetus through the placenta (By similarity). Maintains a key metabolic glutamine/glutamate balance underpinning retrograde signaling by dendritic release of the neurotransmitter glutamate (By similarity). Transports L-proline in differentiating osteoblasts for the efficient synthesis of proline-enriched proteins and provides proline essential for osteoblast differentiation and bone formation during bone development (By similarity).</text>
</comment>
<comment type="catalytic activity">
    <reaction evidence="3">
        <text>L-alanine(in) + Na(+)(in) = L-alanine(out) + Na(+)(out)</text>
        <dbReference type="Rhea" id="RHEA:29283"/>
        <dbReference type="ChEBI" id="CHEBI:29101"/>
        <dbReference type="ChEBI" id="CHEBI:57972"/>
    </reaction>
    <physiologicalReaction direction="right-to-left" evidence="3">
        <dbReference type="Rhea" id="RHEA:29285"/>
    </physiologicalReaction>
</comment>
<comment type="catalytic activity">
    <reaction evidence="3">
        <text>glycine(in) + Na(+)(in) = glycine(out) + Na(+)(out)</text>
        <dbReference type="Rhea" id="RHEA:68228"/>
        <dbReference type="ChEBI" id="CHEBI:29101"/>
        <dbReference type="ChEBI" id="CHEBI:57305"/>
    </reaction>
    <physiologicalReaction direction="right-to-left" evidence="3">
        <dbReference type="Rhea" id="RHEA:68230"/>
    </physiologicalReaction>
</comment>
<comment type="catalytic activity">
    <reaction evidence="3">
        <text>L-serine(in) + Na(+)(in) = L-serine(out) + Na(+)(out)</text>
        <dbReference type="Rhea" id="RHEA:29575"/>
        <dbReference type="ChEBI" id="CHEBI:29101"/>
        <dbReference type="ChEBI" id="CHEBI:33384"/>
    </reaction>
    <physiologicalReaction direction="right-to-left" evidence="3">
        <dbReference type="Rhea" id="RHEA:29577"/>
    </physiologicalReaction>
</comment>
<comment type="catalytic activity">
    <reaction evidence="3">
        <text>L-proline(in) + Na(+)(in) = L-proline(out) + Na(+)(out)</text>
        <dbReference type="Rhea" id="RHEA:28967"/>
        <dbReference type="ChEBI" id="CHEBI:29101"/>
        <dbReference type="ChEBI" id="CHEBI:60039"/>
    </reaction>
    <physiologicalReaction direction="right-to-left" evidence="3">
        <dbReference type="Rhea" id="RHEA:28969"/>
    </physiologicalReaction>
</comment>
<comment type="catalytic activity">
    <reaction evidence="3">
        <text>L-methionine(in) + Na(+)(in) = L-methionine(out) + Na(+)(out)</text>
        <dbReference type="Rhea" id="RHEA:68240"/>
        <dbReference type="ChEBI" id="CHEBI:29101"/>
        <dbReference type="ChEBI" id="CHEBI:57844"/>
    </reaction>
    <physiologicalReaction direction="right-to-left" evidence="3">
        <dbReference type="Rhea" id="RHEA:68242"/>
    </physiologicalReaction>
</comment>
<comment type="catalytic activity">
    <reaction evidence="3">
        <text>L-histidine(in) + Na(+)(in) = L-histidine(out) + Na(+)(out)</text>
        <dbReference type="Rhea" id="RHEA:71583"/>
        <dbReference type="ChEBI" id="CHEBI:29101"/>
        <dbReference type="ChEBI" id="CHEBI:57595"/>
    </reaction>
    <physiologicalReaction direction="right-to-left" evidence="3">
        <dbReference type="Rhea" id="RHEA:71585"/>
    </physiologicalReaction>
</comment>
<comment type="catalytic activity">
    <reaction evidence="3">
        <text>L-asparagine(in) + Na(+)(in) = L-asparagine(out) + Na(+)(out)</text>
        <dbReference type="Rhea" id="RHEA:71383"/>
        <dbReference type="ChEBI" id="CHEBI:29101"/>
        <dbReference type="ChEBI" id="CHEBI:58048"/>
    </reaction>
    <physiologicalReaction direction="right-to-left" evidence="3">
        <dbReference type="Rhea" id="RHEA:71385"/>
    </physiologicalReaction>
</comment>
<comment type="catalytic activity">
    <reaction evidence="3">
        <text>L-glutamine(in) + Na(+)(in) = L-glutamine(out) + Na(+)(out)</text>
        <dbReference type="Rhea" id="RHEA:68236"/>
        <dbReference type="ChEBI" id="CHEBI:29101"/>
        <dbReference type="ChEBI" id="CHEBI:58359"/>
    </reaction>
    <physiologicalReaction direction="right-to-left" evidence="3">
        <dbReference type="Rhea" id="RHEA:68238"/>
    </physiologicalReaction>
</comment>
<comment type="catalytic activity">
    <reaction evidence="3">
        <text>L-threonine(in) + Na(+)(in) = L-threonine(out) + Na(+)(out)</text>
        <dbReference type="Rhea" id="RHEA:69999"/>
        <dbReference type="ChEBI" id="CHEBI:29101"/>
        <dbReference type="ChEBI" id="CHEBI:57926"/>
    </reaction>
    <physiologicalReaction direction="right-to-left" evidence="3">
        <dbReference type="Rhea" id="RHEA:70001"/>
    </physiologicalReaction>
</comment>
<comment type="catalytic activity">
    <reaction evidence="3">
        <text>L-leucine(in) + Na(+)(in) = L-leucine(out) + Na(+)(out)</text>
        <dbReference type="Rhea" id="RHEA:29263"/>
        <dbReference type="ChEBI" id="CHEBI:29101"/>
        <dbReference type="ChEBI" id="CHEBI:57427"/>
    </reaction>
    <physiologicalReaction direction="right-to-left" evidence="3">
        <dbReference type="Rhea" id="RHEA:29265"/>
    </physiologicalReaction>
</comment>
<comment type="catalytic activity">
    <reaction evidence="3">
        <text>L-phenylalanine(in) + Na(+)(in) = L-phenylalanine(out) + Na(+)(out)</text>
        <dbReference type="Rhea" id="RHEA:68244"/>
        <dbReference type="ChEBI" id="CHEBI:29101"/>
        <dbReference type="ChEBI" id="CHEBI:58095"/>
    </reaction>
    <physiologicalReaction direction="right-to-left" evidence="3">
        <dbReference type="Rhea" id="RHEA:68246"/>
    </physiologicalReaction>
</comment>
<comment type="activity regulation">
    <text evidence="3 7">Inhibited by N-methyl-D-glucamine (PubMed:10930503). Inhibited by choline. Allosteric regulation of sodium ions binding by pH (By similarity).</text>
</comment>
<comment type="interaction">
    <interactant intactId="EBI-723083">
        <id>Q96QD8</id>
    </interactant>
    <interactant intactId="EBI-10303987">
        <id>Q9UHG0</id>
        <label>DCDC2</label>
    </interactant>
    <organismsDiffer>false</organismsDiffer>
    <experiments>3</experiments>
</comment>
<comment type="interaction">
    <interactant intactId="EBI-723083">
        <id>Q96QD8</id>
    </interactant>
    <interactant intactId="EBI-348482">
        <id>Q99942</id>
        <label>RNF5</label>
    </interactant>
    <organismsDiffer>false</organismsDiffer>
    <experiments>3</experiments>
</comment>
<comment type="interaction">
    <interactant intactId="EBI-723083">
        <id>Q96QD8</id>
    </interactant>
    <interactant intactId="EBI-10982110">
        <id>Q96Q45-2</id>
        <label>TMEM237</label>
    </interactant>
    <organismsDiffer>false</organismsDiffer>
    <experiments>3</experiments>
</comment>
<comment type="subcellular location">
    <subcellularLocation>
        <location evidence="3">Cell membrane</location>
        <topology evidence="3">Multi-pass membrane protein</topology>
    </subcellularLocation>
    <text evidence="3">Insulin promotes recruitment to the plasma membrane from a pool localized in the trans-Golgi network or endosomes. Enriched in the somatodendritic compartment of neurons, it is also detected at the axonal shaft but excluded from the nerve terminal.</text>
</comment>
<comment type="alternative products">
    <event type="alternative splicing"/>
    <isoform>
        <id>Q96QD8-1</id>
        <name>1</name>
        <sequence type="displayed"/>
    </isoform>
    <isoform>
        <id>Q96QD8-2</id>
        <name>2</name>
        <sequence type="described" ref="VSP_029553 VSP_029554"/>
    </isoform>
</comment>
<comment type="tissue specificity">
    <text evidence="7 9 11">Ubiquitously expressed (PubMed:10930503). Expressed in neocortex (PubMed:16616430). Widely expressed in the central nervous system with higher concentrations in caudal regions. Expressed by glutamatergic and GABAergic neurons together with astrocytes and other non-neuronal cells in the cerebral cortex (at protein level) (PubMed:15774260).</text>
</comment>
<comment type="induction">
    <text evidence="8 9 10 12">Up-regulated upon amino acid deprivation (PubMed:14623874, PubMed:15774260, PubMed:16621798). Up-regulated upon hypertonic conditions (PubMed:15922329, PubMed:16621798).</text>
</comment>
<comment type="domain">
    <text evidence="3">The extracellular C-terminal domain controls the voltage dependence for amino acid transports activity.</text>
</comment>
<comment type="PTM">
    <text evidence="13">Polyubiquitination by NEDD4L regulates the degradation and the activity of SLC38A2.</text>
</comment>
<comment type="similarity">
    <text evidence="17">Belongs to the amino acid/polyamine transporter 2 family.</text>
</comment>
<comment type="sequence caution" evidence="17">
    <conflict type="erroneous initiation">
        <sequence resource="EMBL-CDS" id="BAD18765"/>
    </conflict>
    <text>Truncated N-terminus.</text>
</comment>
<protein>
    <recommendedName>
        <fullName evidence="17">Sodium-coupled neutral amino acid symporter 2</fullName>
    </recommendedName>
    <alternativeName>
        <fullName>Amino acid transporter A2</fullName>
    </alternativeName>
    <alternativeName>
        <fullName>Protein 40-9-1</fullName>
    </alternativeName>
    <alternativeName>
        <fullName>Solute carrier family 38 member 2</fullName>
    </alternativeName>
    <alternativeName>
        <fullName>System A amino acid transporter 2</fullName>
    </alternativeName>
    <alternativeName>
        <fullName>System A transporter 1</fullName>
    </alternativeName>
    <alternativeName>
        <fullName>System N amino acid transporter 2</fullName>
    </alternativeName>
</protein>
<reference key="1">
    <citation type="journal article" date="2000" name="Biochim. Biophys. Acta">
        <title>Primary structure, functional characteristics and tissue expression pattern of human ATA2, a subtype of amino acid transport system A.</title>
        <authorList>
            <person name="Hatanaka T."/>
            <person name="Huang W."/>
            <person name="Wang H."/>
            <person name="Sugawara M."/>
            <person name="Prasad P.D."/>
            <person name="Leibach F.H."/>
            <person name="Ganapathy V."/>
        </authorList>
    </citation>
    <scope>NUCLEOTIDE SEQUENCE [MRNA] (ISOFORM 1)</scope>
    <scope>FUNCTION</scope>
    <scope>ACTIVITY REGULATION</scope>
    <scope>TISSUE SPECIFICITY</scope>
    <source>
        <tissue>Hepatoma</tissue>
    </source>
</reference>
<reference key="2">
    <citation type="submission" date="2000-08" db="EMBL/GenBank/DDBJ databases">
        <title>Expression studies of the human amino acid transporter, hATA2.</title>
        <authorList>
            <person name="Powell J."/>
            <person name="Brock A.P."/>
            <person name="Hart I.R."/>
        </authorList>
    </citation>
    <scope>NUCLEOTIDE SEQUENCE [MRNA] (ISOFORM 1)</scope>
</reference>
<reference key="3">
    <citation type="thesis" date="2001" institute="University of Goettingen" country="Germany">
        <authorList>
            <person name="Schmidt T."/>
        </authorList>
    </citation>
    <scope>NUCLEOTIDE SEQUENCE [MRNA] (ISOFORM 1)</scope>
</reference>
<reference key="4">
    <citation type="journal article" date="2000" name="DNA Res.">
        <title>Prediction of the coding sequences of unidentified human genes. XVI. The complete sequences of 150 new cDNA clones from brain which code for large proteins in vitro.</title>
        <authorList>
            <person name="Nagase T."/>
            <person name="Kikuno R."/>
            <person name="Ishikawa K."/>
            <person name="Hirosawa M."/>
            <person name="Ohara O."/>
        </authorList>
    </citation>
    <scope>NUCLEOTIDE SEQUENCE [LARGE SCALE MRNA] (ISOFORM 1)</scope>
    <source>
        <tissue>Brain</tissue>
    </source>
</reference>
<reference key="5">
    <citation type="journal article" date="2002" name="DNA Res.">
        <title>Construction of expression-ready cDNA clones for KIAA genes: manual curation of 330 KIAA cDNA clones.</title>
        <authorList>
            <person name="Nakajima D."/>
            <person name="Okazaki N."/>
            <person name="Yamakawa H."/>
            <person name="Kikuno R."/>
            <person name="Ohara O."/>
            <person name="Nagase T."/>
        </authorList>
    </citation>
    <scope>SEQUENCE REVISION</scope>
</reference>
<reference key="6">
    <citation type="journal article" date="2004" name="Nat. Genet.">
        <title>Complete sequencing and characterization of 21,243 full-length human cDNAs.</title>
        <authorList>
            <person name="Ota T."/>
            <person name="Suzuki Y."/>
            <person name="Nishikawa T."/>
            <person name="Otsuki T."/>
            <person name="Sugiyama T."/>
            <person name="Irie R."/>
            <person name="Wakamatsu A."/>
            <person name="Hayashi K."/>
            <person name="Sato H."/>
            <person name="Nagai K."/>
            <person name="Kimura K."/>
            <person name="Makita H."/>
            <person name="Sekine M."/>
            <person name="Obayashi M."/>
            <person name="Nishi T."/>
            <person name="Shibahara T."/>
            <person name="Tanaka T."/>
            <person name="Ishii S."/>
            <person name="Yamamoto J."/>
            <person name="Saito K."/>
            <person name="Kawai Y."/>
            <person name="Isono Y."/>
            <person name="Nakamura Y."/>
            <person name="Nagahari K."/>
            <person name="Murakami K."/>
            <person name="Yasuda T."/>
            <person name="Iwayanagi T."/>
            <person name="Wagatsuma M."/>
            <person name="Shiratori A."/>
            <person name="Sudo H."/>
            <person name="Hosoiri T."/>
            <person name="Kaku Y."/>
            <person name="Kodaira H."/>
            <person name="Kondo H."/>
            <person name="Sugawara M."/>
            <person name="Takahashi M."/>
            <person name="Kanda K."/>
            <person name="Yokoi T."/>
            <person name="Furuya T."/>
            <person name="Kikkawa E."/>
            <person name="Omura Y."/>
            <person name="Abe K."/>
            <person name="Kamihara K."/>
            <person name="Katsuta N."/>
            <person name="Sato K."/>
            <person name="Tanikawa M."/>
            <person name="Yamazaki M."/>
            <person name="Ninomiya K."/>
            <person name="Ishibashi T."/>
            <person name="Yamashita H."/>
            <person name="Murakawa K."/>
            <person name="Fujimori K."/>
            <person name="Tanai H."/>
            <person name="Kimata M."/>
            <person name="Watanabe M."/>
            <person name="Hiraoka S."/>
            <person name="Chiba Y."/>
            <person name="Ishida S."/>
            <person name="Ono Y."/>
            <person name="Takiguchi S."/>
            <person name="Watanabe S."/>
            <person name="Yosida M."/>
            <person name="Hotuta T."/>
            <person name="Kusano J."/>
            <person name="Kanehori K."/>
            <person name="Takahashi-Fujii A."/>
            <person name="Hara H."/>
            <person name="Tanase T.-O."/>
            <person name="Nomura Y."/>
            <person name="Togiya S."/>
            <person name="Komai F."/>
            <person name="Hara R."/>
            <person name="Takeuchi K."/>
            <person name="Arita M."/>
            <person name="Imose N."/>
            <person name="Musashino K."/>
            <person name="Yuuki H."/>
            <person name="Oshima A."/>
            <person name="Sasaki N."/>
            <person name="Aotsuka S."/>
            <person name="Yoshikawa Y."/>
            <person name="Matsunawa H."/>
            <person name="Ichihara T."/>
            <person name="Shiohata N."/>
            <person name="Sano S."/>
            <person name="Moriya S."/>
            <person name="Momiyama H."/>
            <person name="Satoh N."/>
            <person name="Takami S."/>
            <person name="Terashima Y."/>
            <person name="Suzuki O."/>
            <person name="Nakagawa S."/>
            <person name="Senoh A."/>
            <person name="Mizoguchi H."/>
            <person name="Goto Y."/>
            <person name="Shimizu F."/>
            <person name="Wakebe H."/>
            <person name="Hishigaki H."/>
            <person name="Watanabe T."/>
            <person name="Sugiyama A."/>
            <person name="Takemoto M."/>
            <person name="Kawakami B."/>
            <person name="Yamazaki M."/>
            <person name="Watanabe K."/>
            <person name="Kumagai A."/>
            <person name="Itakura S."/>
            <person name="Fukuzumi Y."/>
            <person name="Fujimori Y."/>
            <person name="Komiyama M."/>
            <person name="Tashiro H."/>
            <person name="Tanigami A."/>
            <person name="Fujiwara T."/>
            <person name="Ono T."/>
            <person name="Yamada K."/>
            <person name="Fujii Y."/>
            <person name="Ozaki K."/>
            <person name="Hirao M."/>
            <person name="Ohmori Y."/>
            <person name="Kawabata A."/>
            <person name="Hikiji T."/>
            <person name="Kobatake N."/>
            <person name="Inagaki H."/>
            <person name="Ikema Y."/>
            <person name="Okamoto S."/>
            <person name="Okitani R."/>
            <person name="Kawakami T."/>
            <person name="Noguchi S."/>
            <person name="Itoh T."/>
            <person name="Shigeta K."/>
            <person name="Senba T."/>
            <person name="Matsumura K."/>
            <person name="Nakajima Y."/>
            <person name="Mizuno T."/>
            <person name="Morinaga M."/>
            <person name="Sasaki M."/>
            <person name="Togashi T."/>
            <person name="Oyama M."/>
            <person name="Hata H."/>
            <person name="Watanabe M."/>
            <person name="Komatsu T."/>
            <person name="Mizushima-Sugano J."/>
            <person name="Satoh T."/>
            <person name="Shirai Y."/>
            <person name="Takahashi Y."/>
            <person name="Nakagawa K."/>
            <person name="Okumura K."/>
            <person name="Nagase T."/>
            <person name="Nomura N."/>
            <person name="Kikuchi H."/>
            <person name="Masuho Y."/>
            <person name="Yamashita R."/>
            <person name="Nakai K."/>
            <person name="Yada T."/>
            <person name="Nakamura Y."/>
            <person name="Ohara O."/>
            <person name="Isogai T."/>
            <person name="Sugano S."/>
        </authorList>
    </citation>
    <scope>NUCLEOTIDE SEQUENCE [LARGE SCALE MRNA] (ISOFORM 2)</scope>
    <source>
        <tissue>Hepatoma</tissue>
        <tissue>Teratocarcinoma</tissue>
    </source>
</reference>
<reference key="7">
    <citation type="submission" date="2004-06" db="EMBL/GenBank/DDBJ databases">
        <title>Cloning of human full open reading frames in Gateway(TM) system entry vector (pDONR201).</title>
        <authorList>
            <person name="Ebert L."/>
            <person name="Schick M."/>
            <person name="Neubert P."/>
            <person name="Schatten R."/>
            <person name="Henze S."/>
            <person name="Korn B."/>
        </authorList>
    </citation>
    <scope>NUCLEOTIDE SEQUENCE [LARGE SCALE MRNA] (ISOFORM 2)</scope>
</reference>
<reference key="8">
    <citation type="submission" date="2005-07" db="EMBL/GenBank/DDBJ databases">
        <authorList>
            <person name="Mural R.J."/>
            <person name="Istrail S."/>
            <person name="Sutton G.G."/>
            <person name="Florea L."/>
            <person name="Halpern A.L."/>
            <person name="Mobarry C.M."/>
            <person name="Lippert R."/>
            <person name="Walenz B."/>
            <person name="Shatkay H."/>
            <person name="Dew I."/>
            <person name="Miller J.R."/>
            <person name="Flanigan M.J."/>
            <person name="Edwards N.J."/>
            <person name="Bolanos R."/>
            <person name="Fasulo D."/>
            <person name="Halldorsson B.V."/>
            <person name="Hannenhalli S."/>
            <person name="Turner R."/>
            <person name="Yooseph S."/>
            <person name="Lu F."/>
            <person name="Nusskern D.R."/>
            <person name="Shue B.C."/>
            <person name="Zheng X.H."/>
            <person name="Zhong F."/>
            <person name="Delcher A.L."/>
            <person name="Huson D.H."/>
            <person name="Kravitz S.A."/>
            <person name="Mouchard L."/>
            <person name="Reinert K."/>
            <person name="Remington K.A."/>
            <person name="Clark A.G."/>
            <person name="Waterman M.S."/>
            <person name="Eichler E.E."/>
            <person name="Adams M.D."/>
            <person name="Hunkapiller M.W."/>
            <person name="Myers E.W."/>
            <person name="Venter J.C."/>
        </authorList>
    </citation>
    <scope>NUCLEOTIDE SEQUENCE [LARGE SCALE GENOMIC DNA]</scope>
</reference>
<reference key="9">
    <citation type="journal article" date="2004" name="Genome Res.">
        <title>The status, quality, and expansion of the NIH full-length cDNA project: the Mammalian Gene Collection (MGC).</title>
        <authorList>
            <consortium name="The MGC Project Team"/>
        </authorList>
    </citation>
    <scope>NUCLEOTIDE SEQUENCE [LARGE SCALE MRNA] (ISOFORM 1)</scope>
    <source>
        <tissue>Eye</tissue>
    </source>
</reference>
<reference key="10">
    <citation type="journal article" date="2004" name="J. Biol. Chem.">
        <title>Transcriptional control of the human sodium-coupled neutral amino acid transporter system A gene by amino acid availability is mediated by an intronic element.</title>
        <authorList>
            <person name="Palii S.S."/>
            <person name="Chen H."/>
            <person name="Kilberg M.S."/>
        </authorList>
    </citation>
    <scope>INDUCTION</scope>
</reference>
<reference key="11">
    <citation type="journal article" date="2005" name="FEBS Lett.">
        <title>SNAT2 silencing prevents the osmotic induction of transport system A and hinders cell recovery from hypertonic stress.</title>
        <authorList>
            <person name="Bevilacqua E."/>
            <person name="Bussolati O."/>
            <person name="Dall'Asta V."/>
            <person name="Gaccioli F."/>
            <person name="Sala R."/>
            <person name="Gazzola G.C."/>
            <person name="Franchi-Gazzola R."/>
        </authorList>
    </citation>
    <scope>FUNCTION</scope>
    <scope>INDUCTION</scope>
</reference>
<reference key="12">
    <citation type="journal article" date="2005" name="Neurosci. Lett.">
        <title>Functional expression and adaptive regulation of Na+ -dependent neutral amino acid transporter SNAT2/ATA2 in normal human astrocytes under amino acid starved condition.</title>
        <authorList>
            <person name="Tanaka K."/>
            <person name="Yamamoto A."/>
            <person name="Fujita T."/>
        </authorList>
    </citation>
    <scope>INDUCTION</scope>
    <scope>FUNCTION</scope>
    <scope>TISSUE SPECIFICITY</scope>
</reference>
<reference key="13">
    <citation type="journal article" date="2006" name="J. Biol. Chem.">
        <title>Amino acid starvation induces the SNAT2 neutral amino acid transporter by a mechanism that involves eukaryotic initiation factor 2alpha phosphorylation and cap-independent translation.</title>
        <authorList>
            <person name="Gaccioli F."/>
            <person name="Huang C.C."/>
            <person name="Wang C."/>
            <person name="Bevilacqua E."/>
            <person name="Franchi-Gazzola R."/>
            <person name="Gazzola G.C."/>
            <person name="Bussolati O."/>
            <person name="Snider M.D."/>
            <person name="Hatzoglou M."/>
        </authorList>
    </citation>
    <scope>FUNCTION</scope>
    <scope>INDUCTION</scope>
</reference>
<reference key="14">
    <citation type="journal article" date="2006" name="Neuroscience">
        <title>Localization of the Na(+)-coupled neutral amino acid transporter 2 in the cerebral cortex.</title>
        <authorList>
            <person name="Melone M."/>
            <person name="Varoqui H."/>
            <person name="Erickson J.D."/>
            <person name="Conti F."/>
        </authorList>
    </citation>
    <scope>TISSUE SPECIFICITY</scope>
</reference>
<reference key="15">
    <citation type="journal article" date="2008" name="Proc. Natl. Acad. Sci. U.S.A.">
        <title>A quantitative atlas of mitotic phosphorylation.</title>
        <authorList>
            <person name="Dephoure N."/>
            <person name="Zhou C."/>
            <person name="Villen J."/>
            <person name="Beausoleil S.A."/>
            <person name="Bakalarski C.E."/>
            <person name="Elledge S.J."/>
            <person name="Gygi S.P."/>
        </authorList>
    </citation>
    <scope>PHOSPHORYLATION [LARGE SCALE ANALYSIS] AT SER-10 AND SER-12</scope>
    <scope>IDENTIFICATION BY MASS SPECTROMETRY [LARGE SCALE ANALYSIS]</scope>
    <source>
        <tissue>Cervix carcinoma</tissue>
    </source>
</reference>
<reference key="16">
    <citation type="journal article" date="2009" name="Sci. Signal.">
        <title>Quantitative phosphoproteomic analysis of T cell receptor signaling reveals system-wide modulation of protein-protein interactions.</title>
        <authorList>
            <person name="Mayya V."/>
            <person name="Lundgren D.H."/>
            <person name="Hwang S.-I."/>
            <person name="Rezaul K."/>
            <person name="Wu L."/>
            <person name="Eng J.K."/>
            <person name="Rodionov V."/>
            <person name="Han D.K."/>
        </authorList>
    </citation>
    <scope>PHOSPHORYLATION [LARGE SCALE ANALYSIS] AT SER-22</scope>
    <scope>IDENTIFICATION BY MASS SPECTROMETRY [LARGE SCALE ANALYSIS]</scope>
    <source>
        <tissue>Leukemic T-cell</tissue>
    </source>
</reference>
<reference key="17">
    <citation type="journal article" date="2010" name="Sci. Signal.">
        <title>Quantitative phosphoproteomics reveals widespread full phosphorylation site occupancy during mitosis.</title>
        <authorList>
            <person name="Olsen J.V."/>
            <person name="Vermeulen M."/>
            <person name="Santamaria A."/>
            <person name="Kumar C."/>
            <person name="Miller M.L."/>
            <person name="Jensen L.J."/>
            <person name="Gnad F."/>
            <person name="Cox J."/>
            <person name="Jensen T.S."/>
            <person name="Nigg E.A."/>
            <person name="Brunak S."/>
            <person name="Mann M."/>
        </authorList>
    </citation>
    <scope>IDENTIFICATION BY MASS SPECTROMETRY [LARGE SCALE ANALYSIS]</scope>
    <source>
        <tissue>Cervix carcinoma</tissue>
    </source>
</reference>
<reference key="18">
    <citation type="journal article" date="2011" name="BMC Syst. Biol.">
        <title>Initial characterization of the human central proteome.</title>
        <authorList>
            <person name="Burkard T.R."/>
            <person name="Planyavsky M."/>
            <person name="Kaupe I."/>
            <person name="Breitwieser F.P."/>
            <person name="Buerckstuemmer T."/>
            <person name="Bennett K.L."/>
            <person name="Superti-Furga G."/>
            <person name="Colinge J."/>
        </authorList>
    </citation>
    <scope>IDENTIFICATION BY MASS SPECTROMETRY [LARGE SCALE ANALYSIS]</scope>
</reference>
<reference key="19">
    <citation type="journal article" date="2012" name="Proc. Natl. Acad. Sci. U.S.A.">
        <title>N-terminal acetylome analyses and functional insights of the N-terminal acetyltransferase NatB.</title>
        <authorList>
            <person name="Van Damme P."/>
            <person name="Lasa M."/>
            <person name="Polevoda B."/>
            <person name="Gazquez C."/>
            <person name="Elosegui-Artola A."/>
            <person name="Kim D.S."/>
            <person name="De Juan-Pardo E."/>
            <person name="Demeyer K."/>
            <person name="Hole K."/>
            <person name="Larrea E."/>
            <person name="Timmerman E."/>
            <person name="Prieto J."/>
            <person name="Arnesen T."/>
            <person name="Sherman F."/>
            <person name="Gevaert K."/>
            <person name="Aldabe R."/>
        </authorList>
    </citation>
    <scope>IDENTIFICATION BY MASS SPECTROMETRY [LARGE SCALE ANALYSIS]</scope>
</reference>
<reference key="20">
    <citation type="journal article" date="2013" name="J. Proteome Res.">
        <title>Toward a comprehensive characterization of a human cancer cell phosphoproteome.</title>
        <authorList>
            <person name="Zhou H."/>
            <person name="Di Palma S."/>
            <person name="Preisinger C."/>
            <person name="Peng M."/>
            <person name="Polat A.N."/>
            <person name="Heck A.J."/>
            <person name="Mohammed S."/>
        </authorList>
    </citation>
    <scope>PHOSPHORYLATION [LARGE SCALE ANALYSIS] AT SER-55</scope>
    <scope>IDENTIFICATION BY MASS SPECTROMETRY [LARGE SCALE ANALYSIS]</scope>
    <source>
        <tissue>Cervix carcinoma</tissue>
        <tissue>Erythroleukemia</tissue>
    </source>
</reference>
<reference key="21">
    <citation type="journal article" date="2015" name="Clin. Sci.">
        <title>Increased ubiquitination and reduced plasma membrane trafficking of placental amino acid transporter SNAT-2 in human IUGR.</title>
        <authorList>
            <person name="Chen Y.Y."/>
            <person name="Rosario F.J."/>
            <person name="Shehab M.A."/>
            <person name="Powell T.L."/>
            <person name="Gupta M.B."/>
            <person name="Jansson T."/>
        </authorList>
    </citation>
    <scope>UBIQUITINATION BY NEDD4L</scope>
</reference>
<name>S38A2_HUMAN</name>
<keyword id="KW-0025">Alternative splicing</keyword>
<keyword id="KW-0029">Amino-acid transport</keyword>
<keyword id="KW-1003">Cell membrane</keyword>
<keyword id="KW-1015">Disulfide bond</keyword>
<keyword id="KW-0325">Glycoprotein</keyword>
<keyword id="KW-0406">Ion transport</keyword>
<keyword id="KW-0472">Membrane</keyword>
<keyword id="KW-0597">Phosphoprotein</keyword>
<keyword id="KW-1267">Proteomics identification</keyword>
<keyword id="KW-1185">Reference proteome</keyword>
<keyword id="KW-0915">Sodium</keyword>
<keyword id="KW-0739">Sodium transport</keyword>
<keyword id="KW-0769">Symport</keyword>
<keyword id="KW-0812">Transmembrane</keyword>
<keyword id="KW-1133">Transmembrane helix</keyword>
<keyword id="KW-0813">Transport</keyword>
<keyword id="KW-0832">Ubl conjugation</keyword>
<feature type="chain" id="PRO_0000311369" description="Sodium-coupled neutral amino acid symporter 2">
    <location>
        <begin position="1"/>
        <end position="506"/>
    </location>
</feature>
<feature type="topological domain" description="Cytoplasmic" evidence="3 4">
    <location>
        <begin position="1"/>
        <end position="76"/>
    </location>
</feature>
<feature type="transmembrane region" description="Helical" evidence="4">
    <location>
        <begin position="77"/>
        <end position="96"/>
    </location>
</feature>
<feature type="topological domain" description="Extracellular" evidence="3 4">
    <location>
        <begin position="97"/>
        <end position="102"/>
    </location>
</feature>
<feature type="transmembrane region" description="Helical" evidence="3 4">
    <location>
        <begin position="103"/>
        <end position="123"/>
    </location>
</feature>
<feature type="topological domain" description="Cytoplasmic" evidence="3 4">
    <location>
        <begin position="124"/>
        <end position="158"/>
    </location>
</feature>
<feature type="transmembrane region" description="Helical" evidence="3 4">
    <location>
        <begin position="159"/>
        <end position="177"/>
    </location>
</feature>
<feature type="topological domain" description="Extracellular" evidence="4">
    <location>
        <begin position="178"/>
        <end position="188"/>
    </location>
</feature>
<feature type="transmembrane region" description="Helical" evidence="3 4">
    <location>
        <begin position="189"/>
        <end position="209"/>
    </location>
</feature>
<feature type="topological domain" description="Cytoplasmic" evidence="3 4">
    <location>
        <begin position="210"/>
        <end position="217"/>
    </location>
</feature>
<feature type="transmembrane region" description="Helical" evidence="3 4">
    <location>
        <begin position="218"/>
        <end position="238"/>
    </location>
</feature>
<feature type="topological domain" description="Extracellular" evidence="3 4">
    <location>
        <begin position="239"/>
        <end position="292"/>
    </location>
</feature>
<feature type="transmembrane region" description="Helical" evidence="3 4">
    <location>
        <begin position="293"/>
        <end position="313"/>
    </location>
</feature>
<feature type="topological domain" description="Cytoplasmic" evidence="3 4">
    <location>
        <begin position="314"/>
        <end position="329"/>
    </location>
</feature>
<feature type="transmembrane region" description="Helical" evidence="4">
    <location>
        <begin position="330"/>
        <end position="350"/>
    </location>
</feature>
<feature type="topological domain" description="Extracellular" evidence="3 4">
    <location>
        <begin position="351"/>
        <end position="371"/>
    </location>
</feature>
<feature type="transmembrane region" description="Helical" evidence="4">
    <location>
        <begin position="372"/>
        <end position="392"/>
    </location>
</feature>
<feature type="topological domain" description="Cytoplasmic" evidence="3 4">
    <location>
        <begin position="393"/>
        <end position="413"/>
    </location>
</feature>
<feature type="transmembrane region" description="Helical" evidence="4">
    <location>
        <begin position="414"/>
        <end position="434"/>
    </location>
</feature>
<feature type="topological domain" description="Extracellular" evidence="3 4">
    <location>
        <begin position="435"/>
        <end position="436"/>
    </location>
</feature>
<feature type="transmembrane region" description="Helical" evidence="3 4">
    <location>
        <begin position="437"/>
        <end position="457"/>
    </location>
</feature>
<feature type="topological domain" description="Cytoplasmic" evidence="4">
    <location>
        <begin position="458"/>
        <end position="472"/>
    </location>
</feature>
<feature type="transmembrane region" description="Helical" evidence="3 4">
    <location>
        <begin position="473"/>
        <end position="495"/>
    </location>
</feature>
<feature type="topological domain" description="Extracellular" evidence="3 4">
    <location>
        <begin position="496"/>
        <end position="506"/>
    </location>
</feature>
<feature type="region of interest" description="Regulates protein turnover upon amino acid deprivation" evidence="1">
    <location>
        <begin position="1"/>
        <end position="96"/>
    </location>
</feature>
<feature type="region of interest" description="Disordered" evidence="6">
    <location>
        <begin position="1"/>
        <end position="23"/>
    </location>
</feature>
<feature type="binding site" evidence="3">
    <location>
        <position position="82"/>
    </location>
    <ligand>
        <name>Na(+)</name>
        <dbReference type="ChEBI" id="CHEBI:29101"/>
    </ligand>
</feature>
<feature type="binding site" evidence="3">
    <location>
        <position position="386"/>
    </location>
    <ligand>
        <name>Na(+)</name>
        <dbReference type="ChEBI" id="CHEBI:29101"/>
    </ligand>
</feature>
<feature type="modified residue" description="Phosphoserine" evidence="19">
    <location>
        <position position="10"/>
    </location>
</feature>
<feature type="modified residue" description="Phosphoserine" evidence="19">
    <location>
        <position position="12"/>
    </location>
</feature>
<feature type="modified residue" description="Phosphoserine" evidence="2">
    <location>
        <position position="21"/>
    </location>
</feature>
<feature type="modified residue" description="Phosphoserine" evidence="20">
    <location>
        <position position="22"/>
    </location>
</feature>
<feature type="modified residue" description="Phosphoserine" evidence="21">
    <location>
        <position position="55"/>
    </location>
</feature>
<feature type="glycosylation site" description="N-linked (GlcNAc...) asparagine" evidence="4">
    <location>
        <position position="258"/>
    </location>
</feature>
<feature type="glycosylation site" description="N-linked (GlcNAc...) asparagine" evidence="4">
    <location>
        <position position="274"/>
    </location>
</feature>
<feature type="disulfide bond" evidence="5">
    <location>
        <begin position="245"/>
        <end position="281"/>
    </location>
</feature>
<feature type="splice variant" id="VSP_029553" description="In isoform 2." evidence="15 16">
    <location>
        <begin position="1"/>
        <end position="100"/>
    </location>
</feature>
<feature type="splice variant" id="VSP_029554" description="In isoform 2." evidence="15 16">
    <original>IALFI</original>
    <variation>MKQNL</variation>
    <location>
        <begin position="101"/>
        <end position="105"/>
    </location>
</feature>
<feature type="sequence variant" id="VAR_037235" description="In dbSNP:rs11183450.">
    <original>N</original>
    <variation>K</variation>
    <location>
        <position position="48"/>
    </location>
</feature>
<feature type="sequence conflict" description="In Ref. 3; CAC51434." evidence="17" ref="3">
    <original>M</original>
    <variation>V</variation>
    <location>
        <position position="156"/>
    </location>
</feature>
<feature type="sequence conflict" description="In Ref. 6; BAA91846." evidence="17" ref="6">
    <original>H</original>
    <variation>R</variation>
    <location>
        <position position="273"/>
    </location>
</feature>
<organism>
    <name type="scientific">Homo sapiens</name>
    <name type="common">Human</name>
    <dbReference type="NCBI Taxonomy" id="9606"/>
    <lineage>
        <taxon>Eukaryota</taxon>
        <taxon>Metazoa</taxon>
        <taxon>Chordata</taxon>
        <taxon>Craniata</taxon>
        <taxon>Vertebrata</taxon>
        <taxon>Euteleostomi</taxon>
        <taxon>Mammalia</taxon>
        <taxon>Eutheria</taxon>
        <taxon>Euarchontoglires</taxon>
        <taxon>Primates</taxon>
        <taxon>Haplorrhini</taxon>
        <taxon>Catarrhini</taxon>
        <taxon>Hominidae</taxon>
        <taxon>Homo</taxon>
    </lineage>
</organism>
<accession>Q96QD8</accession>
<accession>Q6IA88</accession>
<accession>Q6ZMG2</accession>
<accession>Q9HAV3</accession>
<accession>Q9NVA8</accession>
<accession>Q9P2G5</accession>